<proteinExistence type="inferred from homology"/>
<dbReference type="EC" id="1.13.11.6" evidence="1"/>
<dbReference type="EMBL" id="BA000052">
    <property type="protein sequence ID" value="BAE61177.1"/>
    <property type="molecule type" value="Genomic_DNA"/>
</dbReference>
<dbReference type="SMR" id="Q2UB88"/>
<dbReference type="STRING" id="510516.Q2UB88"/>
<dbReference type="EnsemblFungi" id="BAE61177">
    <property type="protein sequence ID" value="BAE61177"/>
    <property type="gene ID" value="AO090102000066"/>
</dbReference>
<dbReference type="VEuPathDB" id="FungiDB:AO090102000066"/>
<dbReference type="HOGENOM" id="CLU_095765_0_0_1"/>
<dbReference type="OMA" id="FYQHKGG"/>
<dbReference type="UniPathway" id="UPA00253">
    <property type="reaction ID" value="UER00330"/>
</dbReference>
<dbReference type="Proteomes" id="UP000006564">
    <property type="component" value="Chromosome 4"/>
</dbReference>
<dbReference type="GO" id="GO:0005737">
    <property type="term" value="C:cytoplasm"/>
    <property type="evidence" value="ECO:0007669"/>
    <property type="project" value="UniProtKB-SubCell"/>
</dbReference>
<dbReference type="GO" id="GO:0000334">
    <property type="term" value="F:3-hydroxyanthranilate 3,4-dioxygenase activity"/>
    <property type="evidence" value="ECO:0007669"/>
    <property type="project" value="UniProtKB-UniRule"/>
</dbReference>
<dbReference type="GO" id="GO:0008198">
    <property type="term" value="F:ferrous iron binding"/>
    <property type="evidence" value="ECO:0007669"/>
    <property type="project" value="UniProtKB-UniRule"/>
</dbReference>
<dbReference type="GO" id="GO:0034354">
    <property type="term" value="P:'de novo' NAD biosynthetic process from L-tryptophan"/>
    <property type="evidence" value="ECO:0007669"/>
    <property type="project" value="UniProtKB-UniRule"/>
</dbReference>
<dbReference type="GO" id="GO:0043420">
    <property type="term" value="P:anthranilate metabolic process"/>
    <property type="evidence" value="ECO:0007669"/>
    <property type="project" value="UniProtKB-UniRule"/>
</dbReference>
<dbReference type="GO" id="GO:0006569">
    <property type="term" value="P:L-tryptophan catabolic process"/>
    <property type="evidence" value="ECO:0007669"/>
    <property type="project" value="UniProtKB-UniRule"/>
</dbReference>
<dbReference type="GO" id="GO:0019805">
    <property type="term" value="P:quinolinate biosynthetic process"/>
    <property type="evidence" value="ECO:0007669"/>
    <property type="project" value="UniProtKB-UniRule"/>
</dbReference>
<dbReference type="CDD" id="cd06123">
    <property type="entry name" value="cupin_HAO"/>
    <property type="match status" value="1"/>
</dbReference>
<dbReference type="FunFam" id="2.60.120.10:FF:000131">
    <property type="entry name" value="3-hydroxyanthranilate 3,4-dioxygenase"/>
    <property type="match status" value="1"/>
</dbReference>
<dbReference type="Gene3D" id="2.60.120.10">
    <property type="entry name" value="Jelly Rolls"/>
    <property type="match status" value="1"/>
</dbReference>
<dbReference type="HAMAP" id="MF_00825">
    <property type="entry name" value="3_HAO"/>
    <property type="match status" value="1"/>
</dbReference>
<dbReference type="InterPro" id="IPR010329">
    <property type="entry name" value="3hydroanth_dOase"/>
</dbReference>
<dbReference type="InterPro" id="IPR014710">
    <property type="entry name" value="RmlC-like_jellyroll"/>
</dbReference>
<dbReference type="InterPro" id="IPR011051">
    <property type="entry name" value="RmlC_Cupin_sf"/>
</dbReference>
<dbReference type="NCBIfam" id="TIGR03037">
    <property type="entry name" value="anthran_nbaC"/>
    <property type="match status" value="1"/>
</dbReference>
<dbReference type="PANTHER" id="PTHR15497">
    <property type="entry name" value="3-HYDROXYANTHRANILATE 3,4-DIOXYGENASE"/>
    <property type="match status" value="1"/>
</dbReference>
<dbReference type="PANTHER" id="PTHR15497:SF3">
    <property type="entry name" value="3-HYDROXYANTHRANILATE 3,4-DIOXYGENASE 2"/>
    <property type="match status" value="1"/>
</dbReference>
<dbReference type="Pfam" id="PF06052">
    <property type="entry name" value="3-HAO"/>
    <property type="match status" value="1"/>
</dbReference>
<dbReference type="SUPFAM" id="SSF51182">
    <property type="entry name" value="RmlC-like cupins"/>
    <property type="match status" value="1"/>
</dbReference>
<evidence type="ECO:0000255" key="1">
    <source>
        <dbReference type="HAMAP-Rule" id="MF_03019"/>
    </source>
</evidence>
<sequence length="179" mass="20762">MIPPFSFASWVAENEDKLHPPVNNYCLYSGEDFTLMVVGGPNSRNDYHGVFIMVVNQTEEWFYQVKGDMLLRIVENNTTFRDISIKEGEMFLLPGNTPHNPVRFRDTIGLVMERKRPEDSLDRLRWYCSKGKHKKPTIIREEIFHCADLGTQLKPLIERWQIDEESRRCGACGAIADPK</sequence>
<reference key="1">
    <citation type="journal article" date="2005" name="Nature">
        <title>Genome sequencing and analysis of Aspergillus oryzae.</title>
        <authorList>
            <person name="Machida M."/>
            <person name="Asai K."/>
            <person name="Sano M."/>
            <person name="Tanaka T."/>
            <person name="Kumagai T."/>
            <person name="Terai G."/>
            <person name="Kusumoto K."/>
            <person name="Arima T."/>
            <person name="Akita O."/>
            <person name="Kashiwagi Y."/>
            <person name="Abe K."/>
            <person name="Gomi K."/>
            <person name="Horiuchi H."/>
            <person name="Kitamoto K."/>
            <person name="Kobayashi T."/>
            <person name="Takeuchi M."/>
            <person name="Denning D.W."/>
            <person name="Galagan J.E."/>
            <person name="Nierman W.C."/>
            <person name="Yu J."/>
            <person name="Archer D.B."/>
            <person name="Bennett J.W."/>
            <person name="Bhatnagar D."/>
            <person name="Cleveland T.E."/>
            <person name="Fedorova N.D."/>
            <person name="Gotoh O."/>
            <person name="Horikawa H."/>
            <person name="Hosoyama A."/>
            <person name="Ichinomiya M."/>
            <person name="Igarashi R."/>
            <person name="Iwashita K."/>
            <person name="Juvvadi P.R."/>
            <person name="Kato M."/>
            <person name="Kato Y."/>
            <person name="Kin T."/>
            <person name="Kokubun A."/>
            <person name="Maeda H."/>
            <person name="Maeyama N."/>
            <person name="Maruyama J."/>
            <person name="Nagasaki H."/>
            <person name="Nakajima T."/>
            <person name="Oda K."/>
            <person name="Okada K."/>
            <person name="Paulsen I."/>
            <person name="Sakamoto K."/>
            <person name="Sawano T."/>
            <person name="Takahashi M."/>
            <person name="Takase K."/>
            <person name="Terabayashi Y."/>
            <person name="Wortman J.R."/>
            <person name="Yamada O."/>
            <person name="Yamagata Y."/>
            <person name="Anazawa H."/>
            <person name="Hata Y."/>
            <person name="Koide Y."/>
            <person name="Komori T."/>
            <person name="Koyama Y."/>
            <person name="Minetoki T."/>
            <person name="Suharnan S."/>
            <person name="Tanaka A."/>
            <person name="Isono K."/>
            <person name="Kuhara S."/>
            <person name="Ogasawara N."/>
            <person name="Kikuchi H."/>
        </authorList>
    </citation>
    <scope>NUCLEOTIDE SEQUENCE [LARGE SCALE GENOMIC DNA]</scope>
    <source>
        <strain>ATCC 42149 / RIB 40</strain>
    </source>
</reference>
<feature type="chain" id="PRO_0000361982" description="3-hydroxyanthranilate 3,4-dioxygenase 2">
    <location>
        <begin position="1"/>
        <end position="179"/>
    </location>
</feature>
<feature type="binding site" evidence="1">
    <location>
        <position position="44"/>
    </location>
    <ligand>
        <name>O2</name>
        <dbReference type="ChEBI" id="CHEBI:15379"/>
    </ligand>
</feature>
<feature type="binding site" evidence="1">
    <location>
        <position position="48"/>
    </location>
    <ligand>
        <name>Fe cation</name>
        <dbReference type="ChEBI" id="CHEBI:24875"/>
        <note>catalytic</note>
    </ligand>
</feature>
<feature type="binding site" evidence="1">
    <location>
        <position position="60"/>
    </location>
    <ligand>
        <name>Fe cation</name>
        <dbReference type="ChEBI" id="CHEBI:24875"/>
        <note>catalytic</note>
    </ligand>
</feature>
<feature type="binding site" evidence="1">
    <location>
        <position position="60"/>
    </location>
    <ligand>
        <name>substrate</name>
    </ligand>
</feature>
<feature type="binding site" evidence="1">
    <location>
        <position position="99"/>
    </location>
    <ligand>
        <name>Fe cation</name>
        <dbReference type="ChEBI" id="CHEBI:24875"/>
        <note>catalytic</note>
    </ligand>
</feature>
<feature type="binding site" evidence="1">
    <location>
        <position position="103"/>
    </location>
    <ligand>
        <name>substrate</name>
    </ligand>
</feature>
<feature type="binding site" evidence="1">
    <location>
        <position position="113"/>
    </location>
    <ligand>
        <name>substrate</name>
    </ligand>
</feature>
<name>3HAO2_ASPOR</name>
<keyword id="KW-0963">Cytoplasm</keyword>
<keyword id="KW-0223">Dioxygenase</keyword>
<keyword id="KW-0408">Iron</keyword>
<keyword id="KW-0479">Metal-binding</keyword>
<keyword id="KW-0560">Oxidoreductase</keyword>
<keyword id="KW-0662">Pyridine nucleotide biosynthesis</keyword>
<keyword id="KW-1185">Reference proteome</keyword>
<accession>Q2UB88</accession>
<protein>
    <recommendedName>
        <fullName evidence="1">3-hydroxyanthranilate 3,4-dioxygenase 2</fullName>
        <ecNumber evidence="1">1.13.11.6</ecNumber>
    </recommendedName>
    <alternativeName>
        <fullName evidence="1">3-hydroxyanthranilate oxygenase 2</fullName>
        <shortName evidence="1">3-HAO-2</shortName>
    </alternativeName>
    <alternativeName>
        <fullName evidence="1">3-hydroxyanthranilic acid dioxygenase 2</fullName>
        <shortName evidence="1">HAD-2</shortName>
    </alternativeName>
    <alternativeName>
        <fullName evidence="1">Biosynthesis of nicotinic acid protein 1-2</fullName>
    </alternativeName>
</protein>
<comment type="function">
    <text evidence="1">Catalyzes the oxidative ring opening of 3-hydroxyanthranilate to 2-amino-3-carboxymuconate semialdehyde, which spontaneously cyclizes to quinolinate.</text>
</comment>
<comment type="catalytic activity">
    <reaction evidence="1">
        <text>3-hydroxyanthranilate + O2 = (2Z,4Z)-2-amino-3-carboxymuconate 6-semialdehyde</text>
        <dbReference type="Rhea" id="RHEA:17953"/>
        <dbReference type="ChEBI" id="CHEBI:15379"/>
        <dbReference type="ChEBI" id="CHEBI:36559"/>
        <dbReference type="ChEBI" id="CHEBI:77612"/>
        <dbReference type="EC" id="1.13.11.6"/>
    </reaction>
</comment>
<comment type="cofactor">
    <cofactor evidence="1">
        <name>Fe(2+)</name>
        <dbReference type="ChEBI" id="CHEBI:29033"/>
    </cofactor>
</comment>
<comment type="pathway">
    <text evidence="1">Cofactor biosynthesis; NAD(+) biosynthesis; quinolinate from L-kynurenine: step 3/3.</text>
</comment>
<comment type="subcellular location">
    <subcellularLocation>
        <location evidence="1">Cytoplasm</location>
    </subcellularLocation>
</comment>
<comment type="similarity">
    <text evidence="1">Belongs to the 3-HAO family.</text>
</comment>
<organism>
    <name type="scientific">Aspergillus oryzae (strain ATCC 42149 / RIB 40)</name>
    <name type="common">Yellow koji mold</name>
    <dbReference type="NCBI Taxonomy" id="510516"/>
    <lineage>
        <taxon>Eukaryota</taxon>
        <taxon>Fungi</taxon>
        <taxon>Dikarya</taxon>
        <taxon>Ascomycota</taxon>
        <taxon>Pezizomycotina</taxon>
        <taxon>Eurotiomycetes</taxon>
        <taxon>Eurotiomycetidae</taxon>
        <taxon>Eurotiales</taxon>
        <taxon>Aspergillaceae</taxon>
        <taxon>Aspergillus</taxon>
        <taxon>Aspergillus subgen. Circumdati</taxon>
    </lineage>
</organism>
<gene>
    <name type="primary">bna1-2</name>
    <name type="ORF">AO090102000066</name>
</gene>